<keyword id="KW-0002">3D-structure</keyword>
<keyword id="KW-0903">Direct protein sequencing</keyword>
<keyword id="KW-0378">Hydrolase</keyword>
<sequence>MFEGFERRLVDVGDVTINCVVGGSGPALLLLHGFPQNLHMWARVAPLLANEYTVVCADLRGYGGSSKPVGAPDHANYSFRAMASDQRELMRTLGFERFHLVGHDRGGRTGHRMALDHPDSVLSLAVLDIIPTYVMFEEVDRFVARAYWHWYFLQQPAPYPEKVIGADPDTFYEGCLFGWGATGADGFDPEQLEEYRKQWRDPAAIHGSCCDYRAGGTIDFELDHGDLGRQVQCPALVFSGSAGLMHSLFEMQVVWAPRLANMRFASLPGGHFFVDRFPDDTARILREFLSDARSGIHQTERRES</sequence>
<evidence type="ECO:0000250" key="1">
    <source>
        <dbReference type="UniProtKB" id="Q6NAM1"/>
    </source>
</evidence>
<evidence type="ECO:0000255" key="2"/>
<evidence type="ECO:0000269" key="3">
    <source>
    </source>
</evidence>
<evidence type="ECO:0000269" key="4">
    <source ref="1"/>
</evidence>
<evidence type="ECO:0000303" key="5">
    <source ref="1"/>
</evidence>
<evidence type="ECO:0000305" key="6"/>
<evidence type="ECO:0007744" key="7">
    <source>
        <dbReference type="PDB" id="1Y37"/>
    </source>
</evidence>
<evidence type="ECO:0007829" key="8">
    <source>
        <dbReference type="PDB" id="3B12"/>
    </source>
</evidence>
<feature type="chain" id="PRO_0000398585" description="Fluoroacetate dehalogenase">
    <location>
        <begin position="1"/>
        <end position="304"/>
    </location>
</feature>
<feature type="domain" description="AB hydrolase-1" evidence="2">
    <location>
        <begin position="26"/>
        <end position="151"/>
    </location>
</feature>
<feature type="active site" description="Nucleophile">
    <location>
        <position position="104"/>
    </location>
</feature>
<feature type="active site" description="Proton acceptor" evidence="6">
    <location>
        <position position="271"/>
    </location>
</feature>
<feature type="binding site" evidence="1">
    <location>
        <position position="105"/>
    </location>
    <ligand>
        <name>fluoroacetate</name>
        <dbReference type="ChEBI" id="CHEBI:18172"/>
    </ligand>
</feature>
<feature type="binding site" evidence="1">
    <location>
        <position position="108"/>
    </location>
    <ligand>
        <name>fluoroacetate</name>
        <dbReference type="ChEBI" id="CHEBI:18172"/>
    </ligand>
</feature>
<feature type="binding site" evidence="1">
    <location>
        <position position="149"/>
    </location>
    <ligand>
        <name>fluoroacetate</name>
        <dbReference type="ChEBI" id="CHEBI:18172"/>
    </ligand>
</feature>
<feature type="binding site" evidence="1">
    <location>
        <position position="150"/>
    </location>
    <ligand>
        <name>fluoroacetate</name>
        <dbReference type="ChEBI" id="CHEBI:18172"/>
    </ligand>
</feature>
<feature type="binding site" evidence="1">
    <location>
        <position position="212"/>
    </location>
    <ligand>
        <name>fluoroacetate</name>
        <dbReference type="ChEBI" id="CHEBI:18172"/>
    </ligand>
</feature>
<feature type="site" description="Important for enzyme activity">
    <location>
        <position position="128"/>
    </location>
</feature>
<feature type="mutagenesis site" description="Abolishes enzyme activity." evidence="3">
    <original>F</original>
    <variation>A</variation>
    <location>
        <position position="34"/>
    </location>
</feature>
<feature type="mutagenesis site" description="Abolishes enzyme activity." evidence="3">
    <original>D</original>
    <variation>A</variation>
    <location>
        <position position="104"/>
    </location>
</feature>
<feature type="mutagenesis site" description="Abolishes enzyme activity." evidence="3">
    <original>R</original>
    <variation>A</variation>
    <location>
        <position position="105"/>
    </location>
</feature>
<feature type="mutagenesis site" description="Abolishes enzyme activity." evidence="3">
    <original>R</original>
    <variation>A</variation>
    <location>
        <position position="108"/>
    </location>
</feature>
<feature type="mutagenesis site" description="Abolishes enzyme activity." evidence="3">
    <original>D</original>
    <variation>A</variation>
    <location>
        <position position="128"/>
    </location>
</feature>
<feature type="mutagenesis site" description="Abolishes enzyme activity." evidence="3">
    <original>Y</original>
    <variation>A</variation>
    <location>
        <position position="147"/>
    </location>
</feature>
<feature type="mutagenesis site" description="Abolishes enzyme activity." evidence="3">
    <original>H</original>
    <variation>A</variation>
    <location>
        <position position="149"/>
    </location>
</feature>
<feature type="mutagenesis site" description="Abolishes fluoroacetate dehalogenase activity, but does not abolish activity towards chloroacetate." evidence="3">
    <original>W</original>
    <variation>A</variation>
    <variation>F</variation>
    <variation>K</variation>
    <variation>Q</variation>
    <variation>R</variation>
    <variation>Y</variation>
    <location>
        <position position="150"/>
    </location>
</feature>
<feature type="mutagenesis site" description="Abolishes enzyme activity." evidence="3">
    <original>W</original>
    <variation>A</variation>
    <location>
        <position position="179"/>
    </location>
</feature>
<feature type="mutagenesis site" description="Abolishes enzyme activity." evidence="3">
    <original>Y</original>
    <variation>A</variation>
    <location>
        <position position="212"/>
    </location>
</feature>
<feature type="mutagenesis site" description="Abolishes enzyme activity." evidence="3">
    <original>H</original>
    <variation>A</variation>
    <location>
        <position position="271"/>
    </location>
</feature>
<feature type="mutagenesis site" description="Abolishes enzyme activity." evidence="3">
    <original>F</original>
    <variation>A</variation>
    <location>
        <position position="272"/>
    </location>
</feature>
<feature type="strand" evidence="8">
    <location>
        <begin position="6"/>
        <end position="11"/>
    </location>
</feature>
<feature type="strand" evidence="8">
    <location>
        <begin position="13"/>
        <end position="23"/>
    </location>
</feature>
<feature type="strand" evidence="8">
    <location>
        <begin position="25"/>
        <end position="31"/>
    </location>
</feature>
<feature type="helix" evidence="8">
    <location>
        <begin position="38"/>
        <end position="41"/>
    </location>
</feature>
<feature type="helix" evidence="8">
    <location>
        <begin position="44"/>
        <end position="48"/>
    </location>
</feature>
<feature type="turn" evidence="8">
    <location>
        <begin position="49"/>
        <end position="51"/>
    </location>
</feature>
<feature type="strand" evidence="8">
    <location>
        <begin position="52"/>
        <end position="57"/>
    </location>
</feature>
<feature type="helix" evidence="8">
    <location>
        <begin position="75"/>
        <end position="77"/>
    </location>
</feature>
<feature type="helix" evidence="8">
    <location>
        <begin position="79"/>
        <end position="92"/>
    </location>
</feature>
<feature type="strand" evidence="8">
    <location>
        <begin position="96"/>
        <end position="103"/>
    </location>
</feature>
<feature type="helix" evidence="8">
    <location>
        <begin position="105"/>
        <end position="116"/>
    </location>
</feature>
<feature type="helix" evidence="8">
    <location>
        <begin position="118"/>
        <end position="120"/>
    </location>
</feature>
<feature type="strand" evidence="8">
    <location>
        <begin position="121"/>
        <end position="128"/>
    </location>
</feature>
<feature type="helix" evidence="8">
    <location>
        <begin position="132"/>
        <end position="137"/>
    </location>
</feature>
<feature type="helix" evidence="8">
    <location>
        <begin position="141"/>
        <end position="146"/>
    </location>
</feature>
<feature type="helix" evidence="8">
    <location>
        <begin position="149"/>
        <end position="152"/>
    </location>
</feature>
<feature type="helix" evidence="8">
    <location>
        <begin position="159"/>
        <end position="166"/>
    </location>
</feature>
<feature type="helix" evidence="8">
    <location>
        <begin position="168"/>
        <end position="177"/>
    </location>
</feature>
<feature type="turn" evidence="8">
    <location>
        <begin position="178"/>
        <end position="180"/>
    </location>
</feature>
<feature type="helix" evidence="8">
    <location>
        <begin position="184"/>
        <end position="186"/>
    </location>
</feature>
<feature type="helix" evidence="8">
    <location>
        <begin position="189"/>
        <end position="199"/>
    </location>
</feature>
<feature type="helix" evidence="8">
    <location>
        <begin position="202"/>
        <end position="215"/>
    </location>
</feature>
<feature type="helix" evidence="8">
    <location>
        <begin position="218"/>
        <end position="225"/>
    </location>
</feature>
<feature type="turn" evidence="8">
    <location>
        <begin position="226"/>
        <end position="228"/>
    </location>
</feature>
<feature type="strand" evidence="8">
    <location>
        <begin position="235"/>
        <end position="240"/>
    </location>
</feature>
<feature type="helix" evidence="8">
    <location>
        <begin position="244"/>
        <end position="248"/>
    </location>
</feature>
<feature type="helix" evidence="8">
    <location>
        <begin position="251"/>
        <end position="255"/>
    </location>
</feature>
<feature type="helix" evidence="8">
    <location>
        <begin position="256"/>
        <end position="258"/>
    </location>
</feature>
<feature type="strand" evidence="8">
    <location>
        <begin position="259"/>
        <end position="269"/>
    </location>
</feature>
<feature type="helix" evidence="8">
    <location>
        <begin position="273"/>
        <end position="276"/>
    </location>
</feature>
<feature type="helix" evidence="8">
    <location>
        <begin position="278"/>
        <end position="293"/>
    </location>
</feature>
<organism>
    <name type="scientific">Burkholderia sp</name>
    <dbReference type="NCBI Taxonomy" id="36773"/>
    <lineage>
        <taxon>Bacteria</taxon>
        <taxon>Pseudomonadati</taxon>
        <taxon>Pseudomonadota</taxon>
        <taxon>Betaproteobacteria</taxon>
        <taxon>Burkholderiales</taxon>
        <taxon>Burkholderiaceae</taxon>
        <taxon>Burkholderia</taxon>
    </lineage>
</organism>
<proteinExistence type="evidence at protein level"/>
<protein>
    <recommendedName>
        <fullName evidence="5">Fluoroacetate dehalogenase</fullName>
        <ecNumber evidence="3 4">3.8.1.3</ecNumber>
    </recommendedName>
</protein>
<reference key="1">
    <citation type="journal article" date="2003" name="J. Mol. Catal., B Enzym.">
        <title>Purification, characterization, and gene cloning of a novel fluoroacetate dehalogenase from Burkholderia sp. FA1.</title>
        <authorList>
            <person name="Kurihara T."/>
            <person name="Yamauchi T."/>
            <person name="Ichiyama S."/>
            <person name="Takahata H."/>
            <person name="Esaki N."/>
        </authorList>
    </citation>
    <scope>NUCLEOTIDE SEQUENCE [GENOMIC DNA]</scope>
    <scope>PARTIAL PROTEIN SEQUENCE</scope>
    <scope>CATALYTIC ACTIVITY</scope>
    <scope>FUNCTION</scope>
    <scope>BIOPHYSICOCHEMICAL PROPERTIES</scope>
    <scope>INDUCTION</scope>
    <scope>SUBUNIT</scope>
    <source>
        <strain>FA1</strain>
    </source>
</reference>
<reference key="2">
    <citation type="journal article" date="2009" name="Chemistry">
        <title>The catalytic mechanism of fluoroacetate dehalogenase: a computational exploration of biological dehalogenation.</title>
        <authorList>
            <person name="Kamachi T."/>
            <person name="Nakayama T."/>
            <person name="Shitamichi O."/>
            <person name="Jitsumori K."/>
            <person name="Kurihara T."/>
            <person name="Esaki N."/>
            <person name="Yoshizawa K."/>
        </authorList>
    </citation>
    <scope>ACTIVE SITE</scope>
    <scope>ENZYME MECHANISM</scope>
</reference>
<reference evidence="7" key="3">
    <citation type="journal article" date="2009" name="J. Bacteriol.">
        <title>X-Ray crystallographic and mutational studies of fluoroacetate dehalogenase from Burkholderia sp. strain FA1.</title>
        <authorList>
            <person name="Jitsumori K."/>
            <person name="Omi R."/>
            <person name="Kurihara T."/>
            <person name="Kurata A."/>
            <person name="Mihara H."/>
            <person name="Miyahara I."/>
            <person name="Hirotsu K."/>
            <person name="Esaki N."/>
        </authorList>
    </citation>
    <scope>X-RAY CRYSTALLOGRAPHY (1.5 ANGSTROMS)</scope>
    <scope>SUBUNIT</scope>
    <scope>CATALYTIC ACTIVITY</scope>
    <scope>ACTIVE SITE</scope>
    <scope>FUNCTION</scope>
    <scope>MUTAGENESIS OF PHE-34; ASP-104; ARG-105; ARG-108; ASP-128; TYR-147; HIS-149; TRP-150; TRP-179; TYR-212; HIS-271 AND PHE-272</scope>
    <scope>BIOPHYSICOCHEMICAL PROPERTIES</scope>
    <source>
        <strain>FA1</strain>
    </source>
</reference>
<comment type="function">
    <text evidence="3 4">Catalyzes the hydrolytic defluorination of fluoroacetate to produce glycolate (PubMed:19218394, Ref.1). Has only very low activity towards chloroacetate and bromoacetate (PubMed:19218394, Ref.1).</text>
</comment>
<comment type="catalytic activity">
    <reaction evidence="3 4">
        <text>a haloacetate + H2O = a halide anion + glycolate + H(+)</text>
        <dbReference type="Rhea" id="RHEA:11044"/>
        <dbReference type="ChEBI" id="CHEBI:15377"/>
        <dbReference type="ChEBI" id="CHEBI:15378"/>
        <dbReference type="ChEBI" id="CHEBI:16042"/>
        <dbReference type="ChEBI" id="CHEBI:29805"/>
        <dbReference type="ChEBI" id="CHEBI:85638"/>
        <dbReference type="EC" id="3.8.1.3"/>
    </reaction>
    <physiologicalReaction direction="left-to-right" evidence="4">
        <dbReference type="Rhea" id="RHEA:11045"/>
    </physiologicalReaction>
</comment>
<comment type="catalytic activity">
    <reaction evidence="3 4">
        <text>fluoroacetate + H2O = fluoride + glycolate + H(+)</text>
        <dbReference type="Rhea" id="RHEA:30051"/>
        <dbReference type="ChEBI" id="CHEBI:15377"/>
        <dbReference type="ChEBI" id="CHEBI:15378"/>
        <dbReference type="ChEBI" id="CHEBI:17051"/>
        <dbReference type="ChEBI" id="CHEBI:18172"/>
        <dbReference type="ChEBI" id="CHEBI:29805"/>
        <dbReference type="EC" id="3.8.1.3"/>
    </reaction>
    <physiologicalReaction direction="left-to-right" evidence="4">
        <dbReference type="Rhea" id="RHEA:30052"/>
    </physiologicalReaction>
</comment>
<comment type="biophysicochemical properties">
    <kinetics>
        <KM evidence="4">5.1 mM for fluoroacetate</KM>
        <KM evidence="3">9.1 mM for fluoroacetate</KM>
        <Vmax evidence="4">11.0 umol/min/mg enzyme</Vmax>
        <Vmax evidence="3">61.0 umol/min/mg enzyme</Vmax>
    </kinetics>
    <phDependence>
        <text evidence="3 4">Optimum pH is 8.5-9.5.</text>
    </phDependence>
</comment>
<comment type="subunit">
    <text evidence="3 4">Homodimer.</text>
</comment>
<comment type="induction">
    <text evidence="4">Up-regulated by fluoroacetate. Not detectable in the absence of fluoroacetate, or when cells are grown on Luria broth.</text>
</comment>
<comment type="similarity">
    <text evidence="6">Belongs to the AB hydrolase superfamily. Epoxide hydrolase family.</text>
</comment>
<gene>
    <name type="primary">fac-dex</name>
</gene>
<accession>Q1JU72</accession>
<dbReference type="EC" id="3.8.1.3" evidence="3 4"/>
<dbReference type="EMBL" id="AB259121">
    <property type="protein sequence ID" value="BAE94252.1"/>
    <property type="molecule type" value="Genomic_DNA"/>
</dbReference>
<dbReference type="PDB" id="1Y37">
    <property type="method" value="X-ray"/>
    <property type="resolution" value="1.50 A"/>
    <property type="chains" value="A/B=1-304"/>
</dbReference>
<dbReference type="PDB" id="3B12">
    <property type="method" value="X-ray"/>
    <property type="resolution" value="1.20 A"/>
    <property type="chains" value="A/B=1-304"/>
</dbReference>
<dbReference type="PDBsum" id="1Y37"/>
<dbReference type="PDBsum" id="3B12"/>
<dbReference type="SMR" id="Q1JU72"/>
<dbReference type="ESTHER" id="bursp-deha">
    <property type="family name" value="Haloacetate_dehalogenase"/>
</dbReference>
<dbReference type="BRENDA" id="3.8.1.3">
    <property type="organism ID" value="1033"/>
</dbReference>
<dbReference type="EvolutionaryTrace" id="Q1JU72"/>
<dbReference type="GO" id="GO:0016020">
    <property type="term" value="C:membrane"/>
    <property type="evidence" value="ECO:0007669"/>
    <property type="project" value="TreeGrafter"/>
</dbReference>
<dbReference type="GO" id="GO:0018785">
    <property type="term" value="F:haloacetate dehalogenase activity"/>
    <property type="evidence" value="ECO:0007669"/>
    <property type="project" value="UniProtKB-EC"/>
</dbReference>
<dbReference type="GO" id="GO:0047372">
    <property type="term" value="F:monoacylglycerol lipase activity"/>
    <property type="evidence" value="ECO:0007669"/>
    <property type="project" value="TreeGrafter"/>
</dbReference>
<dbReference type="GO" id="GO:0046464">
    <property type="term" value="P:acylglycerol catabolic process"/>
    <property type="evidence" value="ECO:0007669"/>
    <property type="project" value="TreeGrafter"/>
</dbReference>
<dbReference type="Gene3D" id="3.40.50.1820">
    <property type="entry name" value="alpha/beta hydrolase"/>
    <property type="match status" value="1"/>
</dbReference>
<dbReference type="InterPro" id="IPR000073">
    <property type="entry name" value="AB_hydrolase_1"/>
</dbReference>
<dbReference type="InterPro" id="IPR029058">
    <property type="entry name" value="AB_hydrolase_fold"/>
</dbReference>
<dbReference type="InterPro" id="IPR050266">
    <property type="entry name" value="AB_hydrolase_sf"/>
</dbReference>
<dbReference type="InterPro" id="IPR000639">
    <property type="entry name" value="Epox_hydrolase-like"/>
</dbReference>
<dbReference type="PANTHER" id="PTHR43798:SF33">
    <property type="entry name" value="HYDROLASE, PUTATIVE (AFU_ORTHOLOGUE AFUA_2G14860)-RELATED"/>
    <property type="match status" value="1"/>
</dbReference>
<dbReference type="PANTHER" id="PTHR43798">
    <property type="entry name" value="MONOACYLGLYCEROL LIPASE"/>
    <property type="match status" value="1"/>
</dbReference>
<dbReference type="Pfam" id="PF00561">
    <property type="entry name" value="Abhydrolase_1"/>
    <property type="match status" value="1"/>
</dbReference>
<dbReference type="PRINTS" id="PR00111">
    <property type="entry name" value="ABHYDROLASE"/>
</dbReference>
<dbReference type="PRINTS" id="PR00412">
    <property type="entry name" value="EPOXHYDRLASE"/>
</dbReference>
<dbReference type="SUPFAM" id="SSF53474">
    <property type="entry name" value="alpha/beta-Hydrolases"/>
    <property type="match status" value="1"/>
</dbReference>
<name>DEHA_BURSP</name>